<name>Y3466_MYCTO</name>
<comment type="similarity">
    <text evidence="2">Belongs to the Rv1128c/1148c/1588c/1702c/1945/3466 family.</text>
</comment>
<gene>
    <name type="ordered locus">MT3572</name>
</gene>
<dbReference type="EMBL" id="AE000516">
    <property type="protein sequence ID" value="AAK47912.1"/>
    <property type="molecule type" value="Genomic_DNA"/>
</dbReference>
<dbReference type="PIR" id="G70566">
    <property type="entry name" value="G70566"/>
</dbReference>
<dbReference type="KEGG" id="mtc:MT3572"/>
<dbReference type="HOGENOM" id="CLU_099011_1_1_11"/>
<dbReference type="Proteomes" id="UP000001020">
    <property type="component" value="Chromosome"/>
</dbReference>
<dbReference type="InterPro" id="IPR003870">
    <property type="entry name" value="DUF222"/>
</dbReference>
<dbReference type="Pfam" id="PF02720">
    <property type="entry name" value="DUF222"/>
    <property type="match status" value="1"/>
</dbReference>
<proteinExistence type="inferred from homology"/>
<accession>P9WKY0</accession>
<accession>L0TCL8</accession>
<accession>O06331</accession>
<evidence type="ECO:0000256" key="1">
    <source>
        <dbReference type="SAM" id="MobiDB-lite"/>
    </source>
</evidence>
<evidence type="ECO:0000305" key="2"/>
<protein>
    <recommendedName>
        <fullName>Uncharacterized protein MT3572</fullName>
    </recommendedName>
</protein>
<reference key="1">
    <citation type="journal article" date="2002" name="J. Bacteriol.">
        <title>Whole-genome comparison of Mycobacterium tuberculosis clinical and laboratory strains.</title>
        <authorList>
            <person name="Fleischmann R.D."/>
            <person name="Alland D."/>
            <person name="Eisen J.A."/>
            <person name="Carpenter L."/>
            <person name="White O."/>
            <person name="Peterson J.D."/>
            <person name="DeBoy R.T."/>
            <person name="Dodson R.J."/>
            <person name="Gwinn M.L."/>
            <person name="Haft D.H."/>
            <person name="Hickey E.K."/>
            <person name="Kolonay J.F."/>
            <person name="Nelson W.C."/>
            <person name="Umayam L.A."/>
            <person name="Ermolaeva M.D."/>
            <person name="Salzberg S.L."/>
            <person name="Delcher A."/>
            <person name="Utterback T.R."/>
            <person name="Weidman J.F."/>
            <person name="Khouri H.M."/>
            <person name="Gill J."/>
            <person name="Mikula A."/>
            <person name="Bishai W."/>
            <person name="Jacobs W.R. Jr."/>
            <person name="Venter J.C."/>
            <person name="Fraser C.M."/>
        </authorList>
    </citation>
    <scope>NUCLEOTIDE SEQUENCE [LARGE SCALE GENOMIC DNA]</scope>
    <source>
        <strain>CDC 1551 / Oshkosh</strain>
    </source>
</reference>
<keyword id="KW-1185">Reference proteome</keyword>
<feature type="chain" id="PRO_0000427575" description="Uncharacterized protein MT3572">
    <location>
        <begin position="1"/>
        <end position="222"/>
    </location>
</feature>
<feature type="region of interest" description="Disordered" evidence="1">
    <location>
        <begin position="142"/>
        <end position="222"/>
    </location>
</feature>
<feature type="compositionally biased region" description="Low complexity" evidence="1">
    <location>
        <begin position="160"/>
        <end position="169"/>
    </location>
</feature>
<feature type="compositionally biased region" description="Basic residues" evidence="1">
    <location>
        <begin position="182"/>
        <end position="196"/>
    </location>
</feature>
<sequence>MGSGSRERIVEVFDALDAELDRLDEVSFEVLTTPERLRSLERLECLVRRLPAVGHALINQLDAQASEEELGGTLCCALANRLRITKPDAALRIADAADLGPRRALTGEPLAPQLTATATAQRQGLIGEAHVKVIRALFRPPARRGGCVHPPGRRSRPGRQSRSISSRRAGPLRPAGHGLATPRRRPHRHRTRPQTRHHPEQPALRRYVTAKWLPDPPSAGHL</sequence>
<organism>
    <name type="scientific">Mycobacterium tuberculosis (strain CDC 1551 / Oshkosh)</name>
    <dbReference type="NCBI Taxonomy" id="83331"/>
    <lineage>
        <taxon>Bacteria</taxon>
        <taxon>Bacillati</taxon>
        <taxon>Actinomycetota</taxon>
        <taxon>Actinomycetes</taxon>
        <taxon>Mycobacteriales</taxon>
        <taxon>Mycobacteriaceae</taxon>
        <taxon>Mycobacterium</taxon>
        <taxon>Mycobacterium tuberculosis complex</taxon>
    </lineage>
</organism>